<feature type="signal peptide" evidence="2">
    <location>
        <begin position="1"/>
        <end position="18"/>
    </location>
</feature>
<feature type="chain" id="PRO_0000403824" description="Neurotoxin LmNaTx45.2">
    <location>
        <begin position="19"/>
        <end position="94"/>
    </location>
</feature>
<feature type="domain" description="LCN-type CS-alpha/beta" evidence="3">
    <location>
        <begin position="20"/>
        <end position="86"/>
    </location>
</feature>
<feature type="disulfide bond" evidence="3">
    <location>
        <begin position="34"/>
        <end position="85"/>
    </location>
</feature>
<feature type="disulfide bond" evidence="3">
    <location>
        <begin position="44"/>
        <end position="63"/>
    </location>
</feature>
<feature type="disulfide bond" evidence="3">
    <location>
        <begin position="48"/>
        <end position="65"/>
    </location>
</feature>
<feature type="disulfide bond" evidence="3">
    <location>
        <begin position="59"/>
        <end position="85"/>
    </location>
</feature>
<protein>
    <recommendedName>
        <fullName>Neurotoxin LmNaTx45.2</fullName>
    </recommendedName>
</protein>
<keyword id="KW-1015">Disulfide bond</keyword>
<keyword id="KW-0872">Ion channel impairing toxin</keyword>
<keyword id="KW-0528">Neurotoxin</keyword>
<keyword id="KW-0964">Secreted</keyword>
<keyword id="KW-0732">Signal</keyword>
<keyword id="KW-0800">Toxin</keyword>
<keyword id="KW-0738">Voltage-gated sodium channel impairing toxin</keyword>
<proteinExistence type="evidence at transcript level"/>
<evidence type="ECO:0000250" key="1"/>
<evidence type="ECO:0000255" key="2"/>
<evidence type="ECO:0000255" key="3">
    <source>
        <dbReference type="PROSITE-ProRule" id="PRU01210"/>
    </source>
</evidence>
<evidence type="ECO:0000305" key="4"/>
<accession>P0CI82</accession>
<organism>
    <name type="scientific">Lychas mucronatus</name>
    <name type="common">Chinese swimming scorpion</name>
    <dbReference type="NCBI Taxonomy" id="172552"/>
    <lineage>
        <taxon>Eukaryota</taxon>
        <taxon>Metazoa</taxon>
        <taxon>Ecdysozoa</taxon>
        <taxon>Arthropoda</taxon>
        <taxon>Chelicerata</taxon>
        <taxon>Arachnida</taxon>
        <taxon>Scorpiones</taxon>
        <taxon>Buthida</taxon>
        <taxon>Buthoidea</taxon>
        <taxon>Buthidae</taxon>
        <taxon>Lychas</taxon>
    </lineage>
</organism>
<dbReference type="EMBL" id="GT028885">
    <property type="status" value="NOT_ANNOTATED_CDS"/>
    <property type="molecule type" value="mRNA"/>
</dbReference>
<dbReference type="SMR" id="P0CI82"/>
<dbReference type="GO" id="GO:0005576">
    <property type="term" value="C:extracellular region"/>
    <property type="evidence" value="ECO:0007669"/>
    <property type="project" value="UniProtKB-SubCell"/>
</dbReference>
<dbReference type="GO" id="GO:0019871">
    <property type="term" value="F:sodium channel inhibitor activity"/>
    <property type="evidence" value="ECO:0007669"/>
    <property type="project" value="InterPro"/>
</dbReference>
<dbReference type="GO" id="GO:0090729">
    <property type="term" value="F:toxin activity"/>
    <property type="evidence" value="ECO:0007669"/>
    <property type="project" value="UniProtKB-KW"/>
</dbReference>
<dbReference type="CDD" id="cd23106">
    <property type="entry name" value="neurotoxins_LC_scorpion"/>
    <property type="match status" value="1"/>
</dbReference>
<dbReference type="Gene3D" id="3.30.30.10">
    <property type="entry name" value="Knottin, scorpion toxin-like"/>
    <property type="match status" value="1"/>
</dbReference>
<dbReference type="InterPro" id="IPR044062">
    <property type="entry name" value="LCN-type_CS_alpha_beta_dom"/>
</dbReference>
<dbReference type="InterPro" id="IPR036574">
    <property type="entry name" value="Scorpion_toxin-like_sf"/>
</dbReference>
<dbReference type="InterPro" id="IPR002061">
    <property type="entry name" value="Scorpion_toxinL/defensin"/>
</dbReference>
<dbReference type="Pfam" id="PF00537">
    <property type="entry name" value="Toxin_3"/>
    <property type="match status" value="1"/>
</dbReference>
<dbReference type="SUPFAM" id="SSF57095">
    <property type="entry name" value="Scorpion toxin-like"/>
    <property type="match status" value="1"/>
</dbReference>
<dbReference type="PROSITE" id="PS51863">
    <property type="entry name" value="LCN_CSAB"/>
    <property type="match status" value="1"/>
</dbReference>
<name>SNA45_LYCMC</name>
<reference key="1">
    <citation type="journal article" date="2010" name="BMC Genomics">
        <title>Comparative venom gland transcriptome analysis of the scorpion Lychas mucronatus reveals intraspecific toxic gene diversity and new venomous components.</title>
        <authorList>
            <person name="Zhao R."/>
            <person name="Ma Y."/>
            <person name="He Y."/>
            <person name="Di Z."/>
            <person name="Wu Y.-L."/>
            <person name="Cao Z.-J."/>
            <person name="Li W.-X."/>
        </authorList>
    </citation>
    <scope>NUCLEOTIDE SEQUENCE [MRNA]</scope>
    <source>
        <strain>Yunnan</strain>
        <tissue>Venom gland</tissue>
    </source>
</reference>
<sequence length="94" mass="10666">MKLAILSLFLVFQIGVESKKNGFALDHYGKPWECNLFNVFGPYCNNQCTENKARKGYCCTFTCYCFDLPDDAKILEIGDSRKNYCDVSLTDVLG</sequence>
<comment type="function">
    <text evidence="1">Binds voltage-independently at site-4 of sodium channels (Nav) and shift the voltage of activation toward more negative potentials thereby affecting sodium channel activation and promoting spontaneous and repetitive firing.</text>
</comment>
<comment type="subcellular location">
    <subcellularLocation>
        <location evidence="1">Secreted</location>
    </subcellularLocation>
</comment>
<comment type="tissue specificity">
    <text>Expressed by the venom gland.</text>
</comment>
<comment type="domain">
    <text evidence="4">Has the structural arrangement of an alpha-helix connected to antiparallel beta-sheets by disulfide bonds (CS-alpha/beta).</text>
</comment>
<comment type="similarity">
    <text evidence="4">Belongs to the long (4 C-C) scorpion toxin superfamily. Sodium channel inhibitor family. Beta subfamily.</text>
</comment>